<organism>
    <name type="scientific">Aravan virus</name>
    <name type="common">ARAV</name>
    <dbReference type="NCBI Taxonomy" id="211977"/>
    <lineage>
        <taxon>Viruses</taxon>
        <taxon>Riboviria</taxon>
        <taxon>Orthornavirae</taxon>
        <taxon>Negarnaviricota</taxon>
        <taxon>Haploviricotina</taxon>
        <taxon>Monjiviricetes</taxon>
        <taxon>Mononegavirales</taxon>
        <taxon>Rhabdoviridae</taxon>
        <taxon>Alpharhabdovirinae</taxon>
        <taxon>Lyssavirus</taxon>
    </lineage>
</organism>
<sequence length="202" mass="23092">MNILRKIVKSCKDEEDQKPALVSAPPDDDDLWLPPPEYVPLTEITGKKNMRNFCVNGEIKICSPNGYSFRILRHILKSFDGVYSGNRRMIGLVKVVIGLALSGAPVPEGMNWVYKIRRTLVFQWAESRGPLDGEELEYSQEITWDDDSEFIGLQIRVSARQCHIQGRVWCINMNSRACQLWSDMSLKTQQSDEDKNTSLLLE</sequence>
<proteinExistence type="inferred from homology"/>
<evidence type="ECO:0000250" key="1"/>
<evidence type="ECO:0000255" key="2"/>
<evidence type="ECO:0000305" key="3"/>
<reference key="1">
    <citation type="journal article" date="2003" name="Virus Res.">
        <title>Bat lyssaviruses (Aravan and Khujand) from Central Asia: phylogenetic relationships according to N, P and G gene sequences.</title>
        <authorList>
            <person name="Kuzmin I.V."/>
            <person name="Orciari L.A."/>
            <person name="Arai Y.T."/>
            <person name="Smith J.S."/>
            <person name="Hanlon C.A."/>
            <person name="Kameoka Y."/>
            <person name="Rupprecht C.E."/>
        </authorList>
    </citation>
    <scope>NUCLEOTIDE SEQUENCE [GENOMIC RNA]</scope>
</reference>
<reference key="2">
    <citation type="journal article" date="2008" name="Virus Res.">
        <title>Complete genomes of Aravan, Khujand, Irkut and West Caucasian bat viruses, with special attention to the polymerase gene and non-coding regions.</title>
        <authorList>
            <person name="Kuzmin I.V."/>
            <person name="Wu X."/>
            <person name="Tordo N."/>
            <person name="Rupprecht C.E."/>
        </authorList>
    </citation>
    <scope>NUCLEOTIDE SEQUENCE [GENOMIC RNA]</scope>
</reference>
<protein>
    <recommendedName>
        <fullName>Matrix protein</fullName>
    </recommendedName>
    <alternativeName>
        <fullName>Phosphoprotein M2</fullName>
    </alternativeName>
</protein>
<gene>
    <name type="primary">M</name>
</gene>
<accession>Q6X1D6</accession>
<organismHost>
    <name type="scientific">Myotis blythii</name>
    <name type="common">Lesser mouse-eared bat</name>
    <dbReference type="NCBI Taxonomy" id="109482"/>
</organismHost>
<keyword id="KW-1043">Host membrane</keyword>
<keyword id="KW-0945">Host-virus interaction</keyword>
<keyword id="KW-0472">Membrane</keyword>
<keyword id="KW-0597">Phosphoprotein</keyword>
<keyword id="KW-1198">Viral budding</keyword>
<keyword id="KW-1187">Viral budding via the host ESCRT complexes</keyword>
<keyword id="KW-0261">Viral envelope protein</keyword>
<keyword id="KW-0468">Viral matrix protein</keyword>
<keyword id="KW-1188">Viral release from host cell</keyword>
<keyword id="KW-0946">Virion</keyword>
<comment type="function">
    <text evidence="1">Plays a major role in assembly and budding of virion. Completely covers the ribonucleoprotein coil and keep it in condensed bullet-shaped form. Inhibits viral transcription and stimulates replication. Plays a major role in early induction of TRAIL-mediated apoptosis in infected neurons (By similarity).</text>
</comment>
<comment type="subunit">
    <text evidence="1">Homomultimer. Interacts with nucleoprotein and with the cytoplasmic domain of glycoprotein (By similarity).</text>
</comment>
<comment type="subcellular location">
    <subcellularLocation>
        <location>Virion membrane</location>
        <topology>Peripheral membrane protein</topology>
    </subcellularLocation>
    <subcellularLocation>
        <location evidence="1">Host endomembrane system</location>
        <topology evidence="1">Peripheral membrane protein</topology>
    </subcellularLocation>
</comment>
<comment type="domain">
    <text evidence="3">Late-budding domains (L domains) are short sequence motifs essential for viral particle budding. They recruit proteins of the host ESCRT machinery (Endosomal Sorting Complex Required for Transport) or ESCRT-associated proteins. Matrix protein contains one L domain: a PPXY motif which potentially interacts with the WW domain 3 of NEDD4 E3 ubiquitin ligase (Potential).</text>
</comment>
<comment type="miscellaneous">
    <text evidence="1">Most abundant protein in the virion.</text>
</comment>
<comment type="similarity">
    <text evidence="3">Belongs to the lyssavirus matrix protein family.</text>
</comment>
<feature type="chain" id="PRO_0000295569" description="Matrix protein">
    <location>
        <begin position="1"/>
        <end position="202"/>
    </location>
</feature>
<feature type="region of interest" description="Essential for glycoprotein binding" evidence="1">
    <location>
        <begin position="115"/>
        <end position="151"/>
    </location>
</feature>
<feature type="short sequence motif" description="PPXY motif" evidence="2">
    <location>
        <begin position="35"/>
        <end position="38"/>
    </location>
</feature>
<name>MATRX_ARAV</name>
<dbReference type="EMBL" id="EF614259">
    <property type="protein sequence ID" value="AAP86774.1"/>
    <property type="molecule type" value="Genomic_RNA"/>
</dbReference>
<dbReference type="RefSeq" id="YP_007641394.1">
    <property type="nucleotide sequence ID" value="NC_020808.1"/>
</dbReference>
<dbReference type="SMR" id="Q6X1D6"/>
<dbReference type="GeneID" id="14857927"/>
<dbReference type="KEGG" id="vg:14857927"/>
<dbReference type="OrthoDB" id="9130at10239"/>
<dbReference type="Proteomes" id="UP000007445">
    <property type="component" value="Genome"/>
</dbReference>
<dbReference type="GO" id="GO:0033645">
    <property type="term" value="C:host cell endomembrane system"/>
    <property type="evidence" value="ECO:0007669"/>
    <property type="project" value="UniProtKB-SubCell"/>
</dbReference>
<dbReference type="GO" id="GO:0016020">
    <property type="term" value="C:membrane"/>
    <property type="evidence" value="ECO:0007669"/>
    <property type="project" value="UniProtKB-KW"/>
</dbReference>
<dbReference type="GO" id="GO:0019031">
    <property type="term" value="C:viral envelope"/>
    <property type="evidence" value="ECO:0007669"/>
    <property type="project" value="UniProtKB-KW"/>
</dbReference>
<dbReference type="GO" id="GO:0055036">
    <property type="term" value="C:virion membrane"/>
    <property type="evidence" value="ECO:0007669"/>
    <property type="project" value="UniProtKB-SubCell"/>
</dbReference>
<dbReference type="GO" id="GO:0039660">
    <property type="term" value="F:structural constituent of virion"/>
    <property type="evidence" value="ECO:0007669"/>
    <property type="project" value="UniProtKB-KW"/>
</dbReference>
<dbReference type="GO" id="GO:0039702">
    <property type="term" value="P:viral budding via host ESCRT complex"/>
    <property type="evidence" value="ECO:0007669"/>
    <property type="project" value="UniProtKB-KW"/>
</dbReference>
<dbReference type="Gene3D" id="3.10.460.20">
    <property type="entry name" value="Rhabdovirus matrix protein M2"/>
    <property type="match status" value="1"/>
</dbReference>
<dbReference type="InterPro" id="IPR006870">
    <property type="entry name" value="Rhabdo_M"/>
</dbReference>
<dbReference type="InterPro" id="IPR038617">
    <property type="entry name" value="Rhabdovirus_M_sf"/>
</dbReference>
<dbReference type="Pfam" id="PF04785">
    <property type="entry name" value="Rhabdo_M2"/>
    <property type="match status" value="1"/>
</dbReference>